<name>SYT_LACGA</name>
<dbReference type="EC" id="6.1.1.3" evidence="1"/>
<dbReference type="EMBL" id="CP000413">
    <property type="protein sequence ID" value="ABJ60776.1"/>
    <property type="molecule type" value="Genomic_DNA"/>
</dbReference>
<dbReference type="RefSeq" id="WP_003646911.1">
    <property type="nucleotide sequence ID" value="NZ_WBMG01000003.1"/>
</dbReference>
<dbReference type="SMR" id="Q041U6"/>
<dbReference type="GeneID" id="29639726"/>
<dbReference type="KEGG" id="lga:LGAS_1415"/>
<dbReference type="HOGENOM" id="CLU_008554_0_1_9"/>
<dbReference type="BioCyc" id="LGAS324831:G1G6Y-1409-MONOMER"/>
<dbReference type="Proteomes" id="UP000000664">
    <property type="component" value="Chromosome"/>
</dbReference>
<dbReference type="GO" id="GO:0005737">
    <property type="term" value="C:cytoplasm"/>
    <property type="evidence" value="ECO:0007669"/>
    <property type="project" value="UniProtKB-SubCell"/>
</dbReference>
<dbReference type="GO" id="GO:0005524">
    <property type="term" value="F:ATP binding"/>
    <property type="evidence" value="ECO:0007669"/>
    <property type="project" value="UniProtKB-UniRule"/>
</dbReference>
<dbReference type="GO" id="GO:0140096">
    <property type="term" value="F:catalytic activity, acting on a protein"/>
    <property type="evidence" value="ECO:0007669"/>
    <property type="project" value="UniProtKB-ARBA"/>
</dbReference>
<dbReference type="GO" id="GO:0046872">
    <property type="term" value="F:metal ion binding"/>
    <property type="evidence" value="ECO:0007669"/>
    <property type="project" value="UniProtKB-KW"/>
</dbReference>
<dbReference type="GO" id="GO:0004829">
    <property type="term" value="F:threonine-tRNA ligase activity"/>
    <property type="evidence" value="ECO:0007669"/>
    <property type="project" value="UniProtKB-UniRule"/>
</dbReference>
<dbReference type="GO" id="GO:0016740">
    <property type="term" value="F:transferase activity"/>
    <property type="evidence" value="ECO:0007669"/>
    <property type="project" value="UniProtKB-ARBA"/>
</dbReference>
<dbReference type="GO" id="GO:0000049">
    <property type="term" value="F:tRNA binding"/>
    <property type="evidence" value="ECO:0007669"/>
    <property type="project" value="UniProtKB-KW"/>
</dbReference>
<dbReference type="GO" id="GO:0006435">
    <property type="term" value="P:threonyl-tRNA aminoacylation"/>
    <property type="evidence" value="ECO:0007669"/>
    <property type="project" value="UniProtKB-UniRule"/>
</dbReference>
<dbReference type="CDD" id="cd01667">
    <property type="entry name" value="TGS_ThrRS"/>
    <property type="match status" value="1"/>
</dbReference>
<dbReference type="CDD" id="cd00860">
    <property type="entry name" value="ThrRS_anticodon"/>
    <property type="match status" value="1"/>
</dbReference>
<dbReference type="CDD" id="cd00771">
    <property type="entry name" value="ThrRS_core"/>
    <property type="match status" value="1"/>
</dbReference>
<dbReference type="FunFam" id="3.30.930.10:FF:000002">
    <property type="entry name" value="Threonine--tRNA ligase"/>
    <property type="match status" value="1"/>
</dbReference>
<dbReference type="FunFam" id="3.40.50.800:FF:000001">
    <property type="entry name" value="Threonine--tRNA ligase"/>
    <property type="match status" value="1"/>
</dbReference>
<dbReference type="Gene3D" id="3.10.20.30">
    <property type="match status" value="1"/>
</dbReference>
<dbReference type="Gene3D" id="3.40.50.800">
    <property type="entry name" value="Anticodon-binding domain"/>
    <property type="match status" value="1"/>
</dbReference>
<dbReference type="Gene3D" id="3.30.930.10">
    <property type="entry name" value="Bira Bifunctional Protein, Domain 2"/>
    <property type="match status" value="1"/>
</dbReference>
<dbReference type="Gene3D" id="3.30.980.10">
    <property type="entry name" value="Threonyl-trna Synthetase, Chain A, domain 2"/>
    <property type="match status" value="1"/>
</dbReference>
<dbReference type="HAMAP" id="MF_00184">
    <property type="entry name" value="Thr_tRNA_synth"/>
    <property type="match status" value="1"/>
</dbReference>
<dbReference type="InterPro" id="IPR002314">
    <property type="entry name" value="aa-tRNA-synt_IIb"/>
</dbReference>
<dbReference type="InterPro" id="IPR006195">
    <property type="entry name" value="aa-tRNA-synth_II"/>
</dbReference>
<dbReference type="InterPro" id="IPR045864">
    <property type="entry name" value="aa-tRNA-synth_II/BPL/LPL"/>
</dbReference>
<dbReference type="InterPro" id="IPR004154">
    <property type="entry name" value="Anticodon-bd"/>
</dbReference>
<dbReference type="InterPro" id="IPR036621">
    <property type="entry name" value="Anticodon-bd_dom_sf"/>
</dbReference>
<dbReference type="InterPro" id="IPR012675">
    <property type="entry name" value="Beta-grasp_dom_sf"/>
</dbReference>
<dbReference type="InterPro" id="IPR004095">
    <property type="entry name" value="TGS"/>
</dbReference>
<dbReference type="InterPro" id="IPR012676">
    <property type="entry name" value="TGS-like"/>
</dbReference>
<dbReference type="InterPro" id="IPR002320">
    <property type="entry name" value="Thr-tRNA-ligase_IIa"/>
</dbReference>
<dbReference type="InterPro" id="IPR018163">
    <property type="entry name" value="Thr/Ala-tRNA-synth_IIc_edit"/>
</dbReference>
<dbReference type="InterPro" id="IPR047246">
    <property type="entry name" value="ThrRS_anticodon"/>
</dbReference>
<dbReference type="InterPro" id="IPR033728">
    <property type="entry name" value="ThrRS_core"/>
</dbReference>
<dbReference type="InterPro" id="IPR012947">
    <property type="entry name" value="tRNA_SAD"/>
</dbReference>
<dbReference type="NCBIfam" id="TIGR00418">
    <property type="entry name" value="thrS"/>
    <property type="match status" value="1"/>
</dbReference>
<dbReference type="PANTHER" id="PTHR11451:SF56">
    <property type="entry name" value="THREONINE--TRNA LIGASE 1"/>
    <property type="match status" value="1"/>
</dbReference>
<dbReference type="PANTHER" id="PTHR11451">
    <property type="entry name" value="THREONINE-TRNA LIGASE"/>
    <property type="match status" value="1"/>
</dbReference>
<dbReference type="Pfam" id="PF03129">
    <property type="entry name" value="HGTP_anticodon"/>
    <property type="match status" value="1"/>
</dbReference>
<dbReference type="Pfam" id="PF02824">
    <property type="entry name" value="TGS"/>
    <property type="match status" value="1"/>
</dbReference>
<dbReference type="Pfam" id="PF00587">
    <property type="entry name" value="tRNA-synt_2b"/>
    <property type="match status" value="1"/>
</dbReference>
<dbReference type="Pfam" id="PF07973">
    <property type="entry name" value="tRNA_SAD"/>
    <property type="match status" value="1"/>
</dbReference>
<dbReference type="PRINTS" id="PR01047">
    <property type="entry name" value="TRNASYNTHTHR"/>
</dbReference>
<dbReference type="SMART" id="SM00863">
    <property type="entry name" value="tRNA_SAD"/>
    <property type="match status" value="1"/>
</dbReference>
<dbReference type="SUPFAM" id="SSF52954">
    <property type="entry name" value="Class II aaRS ABD-related"/>
    <property type="match status" value="1"/>
</dbReference>
<dbReference type="SUPFAM" id="SSF55681">
    <property type="entry name" value="Class II aaRS and biotin synthetases"/>
    <property type="match status" value="1"/>
</dbReference>
<dbReference type="SUPFAM" id="SSF81271">
    <property type="entry name" value="TGS-like"/>
    <property type="match status" value="1"/>
</dbReference>
<dbReference type="SUPFAM" id="SSF55186">
    <property type="entry name" value="ThrRS/AlaRS common domain"/>
    <property type="match status" value="1"/>
</dbReference>
<dbReference type="PROSITE" id="PS50862">
    <property type="entry name" value="AA_TRNA_LIGASE_II"/>
    <property type="match status" value="1"/>
</dbReference>
<dbReference type="PROSITE" id="PS51880">
    <property type="entry name" value="TGS"/>
    <property type="match status" value="1"/>
</dbReference>
<reference key="1">
    <citation type="journal article" date="2006" name="Proc. Natl. Acad. Sci. U.S.A.">
        <title>Comparative genomics of the lactic acid bacteria.</title>
        <authorList>
            <person name="Makarova K.S."/>
            <person name="Slesarev A."/>
            <person name="Wolf Y.I."/>
            <person name="Sorokin A."/>
            <person name="Mirkin B."/>
            <person name="Koonin E.V."/>
            <person name="Pavlov A."/>
            <person name="Pavlova N."/>
            <person name="Karamychev V."/>
            <person name="Polouchine N."/>
            <person name="Shakhova V."/>
            <person name="Grigoriev I."/>
            <person name="Lou Y."/>
            <person name="Rohksar D."/>
            <person name="Lucas S."/>
            <person name="Huang K."/>
            <person name="Goodstein D.M."/>
            <person name="Hawkins T."/>
            <person name="Plengvidhya V."/>
            <person name="Welker D."/>
            <person name="Hughes J."/>
            <person name="Goh Y."/>
            <person name="Benson A."/>
            <person name="Baldwin K."/>
            <person name="Lee J.-H."/>
            <person name="Diaz-Muniz I."/>
            <person name="Dosti B."/>
            <person name="Smeianov V."/>
            <person name="Wechter W."/>
            <person name="Barabote R."/>
            <person name="Lorca G."/>
            <person name="Altermann E."/>
            <person name="Barrangou R."/>
            <person name="Ganesan B."/>
            <person name="Xie Y."/>
            <person name="Rawsthorne H."/>
            <person name="Tamir D."/>
            <person name="Parker C."/>
            <person name="Breidt F."/>
            <person name="Broadbent J.R."/>
            <person name="Hutkins R."/>
            <person name="O'Sullivan D."/>
            <person name="Steele J."/>
            <person name="Unlu G."/>
            <person name="Saier M.H. Jr."/>
            <person name="Klaenhammer T."/>
            <person name="Richardson P."/>
            <person name="Kozyavkin S."/>
            <person name="Weimer B.C."/>
            <person name="Mills D.A."/>
        </authorList>
    </citation>
    <scope>NUCLEOTIDE SEQUENCE [LARGE SCALE GENOMIC DNA]</scope>
    <source>
        <strain>ATCC 33323 / DSM 20243 / BCRC 14619 / CIP 102991 / JCM 1131 / KCTC 3163 / NCIMB 11718 / NCTC 13722 / AM63</strain>
    </source>
</reference>
<proteinExistence type="inferred from homology"/>
<feature type="chain" id="PRO_1000020410" description="Threonine--tRNA ligase">
    <location>
        <begin position="1"/>
        <end position="643"/>
    </location>
</feature>
<feature type="domain" description="TGS" evidence="2">
    <location>
        <begin position="1"/>
        <end position="62"/>
    </location>
</feature>
<feature type="region of interest" description="Catalytic" evidence="1">
    <location>
        <begin position="239"/>
        <end position="537"/>
    </location>
</feature>
<feature type="binding site" evidence="1">
    <location>
        <position position="333"/>
    </location>
    <ligand>
        <name>Zn(2+)</name>
        <dbReference type="ChEBI" id="CHEBI:29105"/>
    </ligand>
</feature>
<feature type="binding site" evidence="1">
    <location>
        <position position="384"/>
    </location>
    <ligand>
        <name>Zn(2+)</name>
        <dbReference type="ChEBI" id="CHEBI:29105"/>
    </ligand>
</feature>
<feature type="binding site" evidence="1">
    <location>
        <position position="514"/>
    </location>
    <ligand>
        <name>Zn(2+)</name>
        <dbReference type="ChEBI" id="CHEBI:29105"/>
    </ligand>
</feature>
<comment type="function">
    <text evidence="1">Catalyzes the attachment of threonine to tRNA(Thr) in a two-step reaction: L-threonine is first activated by ATP to form Thr-AMP and then transferred to the acceptor end of tRNA(Thr). Also edits incorrectly charged L-seryl-tRNA(Thr).</text>
</comment>
<comment type="catalytic activity">
    <reaction evidence="1">
        <text>tRNA(Thr) + L-threonine + ATP = L-threonyl-tRNA(Thr) + AMP + diphosphate + H(+)</text>
        <dbReference type="Rhea" id="RHEA:24624"/>
        <dbReference type="Rhea" id="RHEA-COMP:9670"/>
        <dbReference type="Rhea" id="RHEA-COMP:9704"/>
        <dbReference type="ChEBI" id="CHEBI:15378"/>
        <dbReference type="ChEBI" id="CHEBI:30616"/>
        <dbReference type="ChEBI" id="CHEBI:33019"/>
        <dbReference type="ChEBI" id="CHEBI:57926"/>
        <dbReference type="ChEBI" id="CHEBI:78442"/>
        <dbReference type="ChEBI" id="CHEBI:78534"/>
        <dbReference type="ChEBI" id="CHEBI:456215"/>
        <dbReference type="EC" id="6.1.1.3"/>
    </reaction>
</comment>
<comment type="cofactor">
    <cofactor evidence="1">
        <name>Zn(2+)</name>
        <dbReference type="ChEBI" id="CHEBI:29105"/>
    </cofactor>
    <text evidence="1">Binds 1 zinc ion per subunit.</text>
</comment>
<comment type="subunit">
    <text evidence="1">Homodimer.</text>
</comment>
<comment type="subcellular location">
    <subcellularLocation>
        <location evidence="1">Cytoplasm</location>
    </subcellularLocation>
</comment>
<comment type="similarity">
    <text evidence="1">Belongs to the class-II aminoacyl-tRNA synthetase family.</text>
</comment>
<keyword id="KW-0030">Aminoacyl-tRNA synthetase</keyword>
<keyword id="KW-0067">ATP-binding</keyword>
<keyword id="KW-0963">Cytoplasm</keyword>
<keyword id="KW-0436">Ligase</keyword>
<keyword id="KW-0479">Metal-binding</keyword>
<keyword id="KW-0547">Nucleotide-binding</keyword>
<keyword id="KW-0648">Protein biosynthesis</keyword>
<keyword id="KW-0694">RNA-binding</keyword>
<keyword id="KW-0820">tRNA-binding</keyword>
<keyword id="KW-0862">Zinc</keyword>
<organism>
    <name type="scientific">Lactobacillus gasseri (strain ATCC 33323 / DSM 20243 / BCRC 14619 / CIP 102991 / JCM 1131 / KCTC 3163 / NCIMB 11718 / NCTC 13722 / AM63)</name>
    <dbReference type="NCBI Taxonomy" id="324831"/>
    <lineage>
        <taxon>Bacteria</taxon>
        <taxon>Bacillati</taxon>
        <taxon>Bacillota</taxon>
        <taxon>Bacilli</taxon>
        <taxon>Lactobacillales</taxon>
        <taxon>Lactobacillaceae</taxon>
        <taxon>Lactobacillus</taxon>
    </lineage>
</organism>
<gene>
    <name evidence="1" type="primary">thrS</name>
    <name type="ordered locus">LGAS_1415</name>
</gene>
<accession>Q041U6</accession>
<sequence length="643" mass="73538">MSFSVTLPDGSKKDFDKAVSVKELASSIATSLGKAAVGAKINGEMKPLDYVVDEDVEAAIITDKDEEGLNILRATAAFLLEAIAKRKYPELRLGMHEADEGGFFVDTDKEDQIKITELPELEKEMQKAIKNGEKIEYTSMKKSELEDIFKDDQFKLDLLKDEKDEVAVYKLGDFVDFGFEALLPNTGKIKNFKLLSVAGAYWLGKSSNPMLQRIFGTAFFKKAALDEDLKRRAEIKERDHRTIGRDLDLFFVDPKVGAGLPYWMPKGATIRRVVERYIVDKEVADGYEHVYTPVLMNVDAYKTSGHWAHYRDDMFPPMDMGDGEMLELRPMNCPSHIQIYKHHIRSYRELPIRIAELGMMHRYEKSGALSGLQRVREMTLNDGHTFVALDQIREEFAKVLKLIMDVYKDFDITDYYFRLSYRDPKNTDKYYANDEMWEKSQSMLKAAMDDLGLDYVEAEGEAAFYGPKLDIQTKTALGNDETMSTIQLDFMLPERFGLTYVGQDGEEHRPVMIHRGIVGTMERFIAYLTEIYKGAFPTWLAPVQAEIIPVNEEAHGAYADKVREELAKRGFRAEVDHRNEKLGYKIRESQTQKVPYTLVLGDDEMNANGVNVRRYGTEEQISKSLDDFIAEIDADVKSYSREK</sequence>
<protein>
    <recommendedName>
        <fullName evidence="1">Threonine--tRNA ligase</fullName>
        <ecNumber evidence="1">6.1.1.3</ecNumber>
    </recommendedName>
    <alternativeName>
        <fullName evidence="1">Threonyl-tRNA synthetase</fullName>
        <shortName evidence="1">ThrRS</shortName>
    </alternativeName>
</protein>
<evidence type="ECO:0000255" key="1">
    <source>
        <dbReference type="HAMAP-Rule" id="MF_00184"/>
    </source>
</evidence>
<evidence type="ECO:0000255" key="2">
    <source>
        <dbReference type="PROSITE-ProRule" id="PRU01228"/>
    </source>
</evidence>